<reference key="1">
    <citation type="journal article" date="2009" name="BMC Genomics">
        <title>Conservation in the face of diversity: multistrain analysis of an intracellular bacterium.</title>
        <authorList>
            <person name="Dark M.J."/>
            <person name="Herndon D.R."/>
            <person name="Kappmeyer L.S."/>
            <person name="Gonzales M.P."/>
            <person name="Nordeen E."/>
            <person name="Palmer G.H."/>
            <person name="Knowles D.P. Jr."/>
            <person name="Brayton K.A."/>
        </authorList>
    </citation>
    <scope>NUCLEOTIDE SEQUENCE [LARGE SCALE GENOMIC DNA]</scope>
    <source>
        <strain>Florida</strain>
    </source>
</reference>
<evidence type="ECO:0000255" key="1">
    <source>
        <dbReference type="HAMAP-Rule" id="MF_00127"/>
    </source>
</evidence>
<dbReference type="EC" id="6.1.1.21" evidence="1"/>
<dbReference type="EMBL" id="CP001079">
    <property type="protein sequence ID" value="ACM48989.1"/>
    <property type="molecule type" value="Genomic_DNA"/>
</dbReference>
<dbReference type="RefSeq" id="WP_010262775.1">
    <property type="nucleotide sequence ID" value="NZ_AFMS01000025.1"/>
</dbReference>
<dbReference type="SMR" id="B9KHM7"/>
<dbReference type="STRING" id="320483.AMF_101"/>
<dbReference type="GeneID" id="7398817"/>
<dbReference type="KEGG" id="amf:AMF_101"/>
<dbReference type="PATRIC" id="fig|320483.3.peg.119"/>
<dbReference type="eggNOG" id="COG0124">
    <property type="taxonomic scope" value="Bacteria"/>
</dbReference>
<dbReference type="HOGENOM" id="CLU_025113_1_0_5"/>
<dbReference type="Proteomes" id="UP000007307">
    <property type="component" value="Chromosome"/>
</dbReference>
<dbReference type="GO" id="GO:0005737">
    <property type="term" value="C:cytoplasm"/>
    <property type="evidence" value="ECO:0007669"/>
    <property type="project" value="UniProtKB-SubCell"/>
</dbReference>
<dbReference type="GO" id="GO:0005524">
    <property type="term" value="F:ATP binding"/>
    <property type="evidence" value="ECO:0007669"/>
    <property type="project" value="UniProtKB-UniRule"/>
</dbReference>
<dbReference type="GO" id="GO:0004821">
    <property type="term" value="F:histidine-tRNA ligase activity"/>
    <property type="evidence" value="ECO:0007669"/>
    <property type="project" value="UniProtKB-UniRule"/>
</dbReference>
<dbReference type="GO" id="GO:0006427">
    <property type="term" value="P:histidyl-tRNA aminoacylation"/>
    <property type="evidence" value="ECO:0007669"/>
    <property type="project" value="UniProtKB-UniRule"/>
</dbReference>
<dbReference type="CDD" id="cd00773">
    <property type="entry name" value="HisRS-like_core"/>
    <property type="match status" value="1"/>
</dbReference>
<dbReference type="Gene3D" id="3.40.50.800">
    <property type="entry name" value="Anticodon-binding domain"/>
    <property type="match status" value="1"/>
</dbReference>
<dbReference type="Gene3D" id="3.30.930.10">
    <property type="entry name" value="Bira Bifunctional Protein, Domain 2"/>
    <property type="match status" value="1"/>
</dbReference>
<dbReference type="HAMAP" id="MF_00127">
    <property type="entry name" value="His_tRNA_synth"/>
    <property type="match status" value="1"/>
</dbReference>
<dbReference type="InterPro" id="IPR006195">
    <property type="entry name" value="aa-tRNA-synth_II"/>
</dbReference>
<dbReference type="InterPro" id="IPR045864">
    <property type="entry name" value="aa-tRNA-synth_II/BPL/LPL"/>
</dbReference>
<dbReference type="InterPro" id="IPR004154">
    <property type="entry name" value="Anticodon-bd"/>
</dbReference>
<dbReference type="InterPro" id="IPR036621">
    <property type="entry name" value="Anticodon-bd_dom_sf"/>
</dbReference>
<dbReference type="InterPro" id="IPR015807">
    <property type="entry name" value="His-tRNA-ligase"/>
</dbReference>
<dbReference type="InterPro" id="IPR041715">
    <property type="entry name" value="HisRS-like_core"/>
</dbReference>
<dbReference type="InterPro" id="IPR004516">
    <property type="entry name" value="HisRS/HisZ"/>
</dbReference>
<dbReference type="NCBIfam" id="TIGR00442">
    <property type="entry name" value="hisS"/>
    <property type="match status" value="1"/>
</dbReference>
<dbReference type="PANTHER" id="PTHR43707:SF1">
    <property type="entry name" value="HISTIDINE--TRNA LIGASE, MITOCHONDRIAL-RELATED"/>
    <property type="match status" value="1"/>
</dbReference>
<dbReference type="PANTHER" id="PTHR43707">
    <property type="entry name" value="HISTIDYL-TRNA SYNTHETASE"/>
    <property type="match status" value="1"/>
</dbReference>
<dbReference type="Pfam" id="PF03129">
    <property type="entry name" value="HGTP_anticodon"/>
    <property type="match status" value="1"/>
</dbReference>
<dbReference type="Pfam" id="PF13393">
    <property type="entry name" value="tRNA-synt_His"/>
    <property type="match status" value="1"/>
</dbReference>
<dbReference type="PIRSF" id="PIRSF001549">
    <property type="entry name" value="His-tRNA_synth"/>
    <property type="match status" value="1"/>
</dbReference>
<dbReference type="SUPFAM" id="SSF52954">
    <property type="entry name" value="Class II aaRS ABD-related"/>
    <property type="match status" value="1"/>
</dbReference>
<dbReference type="SUPFAM" id="SSF55681">
    <property type="entry name" value="Class II aaRS and biotin synthetases"/>
    <property type="match status" value="1"/>
</dbReference>
<dbReference type="PROSITE" id="PS50862">
    <property type="entry name" value="AA_TRNA_LIGASE_II"/>
    <property type="match status" value="1"/>
</dbReference>
<gene>
    <name evidence="1" type="primary">hisS</name>
    <name type="ordered locus">AMF_101</name>
</gene>
<feature type="chain" id="PRO_1000199112" description="Histidine--tRNA ligase">
    <location>
        <begin position="1"/>
        <end position="430"/>
    </location>
</feature>
<organism>
    <name type="scientific">Anaplasma marginale (strain Florida)</name>
    <dbReference type="NCBI Taxonomy" id="320483"/>
    <lineage>
        <taxon>Bacteria</taxon>
        <taxon>Pseudomonadati</taxon>
        <taxon>Pseudomonadota</taxon>
        <taxon>Alphaproteobacteria</taxon>
        <taxon>Rickettsiales</taxon>
        <taxon>Anaplasmataceae</taxon>
        <taxon>Anaplasma</taxon>
    </lineage>
</organism>
<accession>B9KHM7</accession>
<sequence>MNVGKLQPVRGTRDLLPEECYKFWHIRDVAHDIGERYGFVPVETPIFEFQDVFLKTLGDSSDIIGKEMYSFPDRGGDVLVLRPELTAAVARMLICERLTLPARLFTFGPVFRYERPQKCRQRQFHQINYEHFGAGCTADAELMALAYDILGALNLRSEVQLEINSLGNQDSVLEYRNSLLKYFEKHEHALSEDSRRRLQTNPLRILDSKDRGDIAILCGAPVIADFYDDESKMTFNGVMQQLDNLGIPYTVNPRLVRGLDYYCGTVFEFKTTSLGSQDAVIAGGRYDKLVASMGGGDVPAVGFAGGVERLASLAAYSHSTRFSVAFLPLGEEAARCAMRSAYELRGRGIRVLCDGVVEKLKIGLKHADRSGVDLALILGDEEIAKGEVLCRHMDTGLQQTVSISNLGDYVSGMESNAQGNNRAALSSAGE</sequence>
<protein>
    <recommendedName>
        <fullName evidence="1">Histidine--tRNA ligase</fullName>
        <ecNumber evidence="1">6.1.1.21</ecNumber>
    </recommendedName>
    <alternativeName>
        <fullName evidence="1">Histidyl-tRNA synthetase</fullName>
        <shortName evidence="1">HisRS</shortName>
    </alternativeName>
</protein>
<comment type="catalytic activity">
    <reaction evidence="1">
        <text>tRNA(His) + L-histidine + ATP = L-histidyl-tRNA(His) + AMP + diphosphate + H(+)</text>
        <dbReference type="Rhea" id="RHEA:17313"/>
        <dbReference type="Rhea" id="RHEA-COMP:9665"/>
        <dbReference type="Rhea" id="RHEA-COMP:9689"/>
        <dbReference type="ChEBI" id="CHEBI:15378"/>
        <dbReference type="ChEBI" id="CHEBI:30616"/>
        <dbReference type="ChEBI" id="CHEBI:33019"/>
        <dbReference type="ChEBI" id="CHEBI:57595"/>
        <dbReference type="ChEBI" id="CHEBI:78442"/>
        <dbReference type="ChEBI" id="CHEBI:78527"/>
        <dbReference type="ChEBI" id="CHEBI:456215"/>
        <dbReference type="EC" id="6.1.1.21"/>
    </reaction>
</comment>
<comment type="subunit">
    <text evidence="1">Homodimer.</text>
</comment>
<comment type="subcellular location">
    <subcellularLocation>
        <location evidence="1">Cytoplasm</location>
    </subcellularLocation>
</comment>
<comment type="similarity">
    <text evidence="1">Belongs to the class-II aminoacyl-tRNA synthetase family.</text>
</comment>
<name>SYH_ANAMF</name>
<proteinExistence type="inferred from homology"/>
<keyword id="KW-0030">Aminoacyl-tRNA synthetase</keyword>
<keyword id="KW-0067">ATP-binding</keyword>
<keyword id="KW-0963">Cytoplasm</keyword>
<keyword id="KW-0436">Ligase</keyword>
<keyword id="KW-0547">Nucleotide-binding</keyword>
<keyword id="KW-0648">Protein biosynthesis</keyword>
<keyword id="KW-1185">Reference proteome</keyword>